<comment type="function">
    <text evidence="1">Catalyzes the ATP-dependent transfer of a sulfur to tRNA to produce 4-thiouridine in position 8 of tRNAs, which functions as a near-UV photosensor. Also catalyzes the transfer of sulfur to the sulfur carrier protein ThiS, forming ThiS-thiocarboxylate. This is a step in the synthesis of thiazole, in the thiamine biosynthesis pathway. The sulfur is donated as persulfide by IscS.</text>
</comment>
<comment type="catalytic activity">
    <reaction evidence="1">
        <text>[ThiI sulfur-carrier protein]-S-sulfanyl-L-cysteine + a uridine in tRNA + 2 reduced [2Fe-2S]-[ferredoxin] + ATP + H(+) = [ThiI sulfur-carrier protein]-L-cysteine + a 4-thiouridine in tRNA + 2 oxidized [2Fe-2S]-[ferredoxin] + AMP + diphosphate</text>
        <dbReference type="Rhea" id="RHEA:24176"/>
        <dbReference type="Rhea" id="RHEA-COMP:10000"/>
        <dbReference type="Rhea" id="RHEA-COMP:10001"/>
        <dbReference type="Rhea" id="RHEA-COMP:13337"/>
        <dbReference type="Rhea" id="RHEA-COMP:13338"/>
        <dbReference type="Rhea" id="RHEA-COMP:13339"/>
        <dbReference type="Rhea" id="RHEA-COMP:13340"/>
        <dbReference type="ChEBI" id="CHEBI:15378"/>
        <dbReference type="ChEBI" id="CHEBI:29950"/>
        <dbReference type="ChEBI" id="CHEBI:30616"/>
        <dbReference type="ChEBI" id="CHEBI:33019"/>
        <dbReference type="ChEBI" id="CHEBI:33737"/>
        <dbReference type="ChEBI" id="CHEBI:33738"/>
        <dbReference type="ChEBI" id="CHEBI:61963"/>
        <dbReference type="ChEBI" id="CHEBI:65315"/>
        <dbReference type="ChEBI" id="CHEBI:136798"/>
        <dbReference type="ChEBI" id="CHEBI:456215"/>
        <dbReference type="EC" id="2.8.1.4"/>
    </reaction>
</comment>
<comment type="catalytic activity">
    <reaction evidence="1">
        <text>[ThiS sulfur-carrier protein]-C-terminal Gly-Gly-AMP + S-sulfanyl-L-cysteinyl-[cysteine desulfurase] + AH2 = [ThiS sulfur-carrier protein]-C-terminal-Gly-aminoethanethioate + L-cysteinyl-[cysteine desulfurase] + A + AMP + 2 H(+)</text>
        <dbReference type="Rhea" id="RHEA:43340"/>
        <dbReference type="Rhea" id="RHEA-COMP:12157"/>
        <dbReference type="Rhea" id="RHEA-COMP:12158"/>
        <dbReference type="Rhea" id="RHEA-COMP:12910"/>
        <dbReference type="Rhea" id="RHEA-COMP:19908"/>
        <dbReference type="ChEBI" id="CHEBI:13193"/>
        <dbReference type="ChEBI" id="CHEBI:15378"/>
        <dbReference type="ChEBI" id="CHEBI:17499"/>
        <dbReference type="ChEBI" id="CHEBI:29950"/>
        <dbReference type="ChEBI" id="CHEBI:61963"/>
        <dbReference type="ChEBI" id="CHEBI:90618"/>
        <dbReference type="ChEBI" id="CHEBI:232372"/>
        <dbReference type="ChEBI" id="CHEBI:456215"/>
    </reaction>
</comment>
<comment type="pathway">
    <text evidence="1">Cofactor biosynthesis; thiamine diphosphate biosynthesis.</text>
</comment>
<comment type="subcellular location">
    <subcellularLocation>
        <location evidence="1">Cytoplasm</location>
    </subcellularLocation>
</comment>
<comment type="similarity">
    <text evidence="1">Belongs to the ThiI family.</text>
</comment>
<keyword id="KW-0067">ATP-binding</keyword>
<keyword id="KW-0963">Cytoplasm</keyword>
<keyword id="KW-0547">Nucleotide-binding</keyword>
<keyword id="KW-1185">Reference proteome</keyword>
<keyword id="KW-0694">RNA-binding</keyword>
<keyword id="KW-0784">Thiamine biosynthesis</keyword>
<keyword id="KW-0808">Transferase</keyword>
<keyword id="KW-0820">tRNA-binding</keyword>
<dbReference type="EC" id="2.8.1.4" evidence="1"/>
<dbReference type="EMBL" id="CP000253">
    <property type="protein sequence ID" value="ABD30892.1"/>
    <property type="molecule type" value="Genomic_DNA"/>
</dbReference>
<dbReference type="RefSeq" id="WP_000872653.1">
    <property type="nucleotide sequence ID" value="NZ_LS483365.1"/>
</dbReference>
<dbReference type="RefSeq" id="YP_500329.1">
    <property type="nucleotide sequence ID" value="NC_007795.1"/>
</dbReference>
<dbReference type="SMR" id="Q2FXL1"/>
<dbReference type="STRING" id="93061.SAOUHSC_01824"/>
<dbReference type="PaxDb" id="1280-SAXN108_1743"/>
<dbReference type="GeneID" id="3921774"/>
<dbReference type="KEGG" id="sao:SAOUHSC_01824"/>
<dbReference type="PATRIC" id="fig|93061.5.peg.1663"/>
<dbReference type="eggNOG" id="COG0301">
    <property type="taxonomic scope" value="Bacteria"/>
</dbReference>
<dbReference type="HOGENOM" id="CLU_037952_4_0_9"/>
<dbReference type="OrthoDB" id="9773948at2"/>
<dbReference type="UniPathway" id="UPA00060"/>
<dbReference type="PRO" id="PR:Q2FXL1"/>
<dbReference type="Proteomes" id="UP000008816">
    <property type="component" value="Chromosome"/>
</dbReference>
<dbReference type="GO" id="GO:0005829">
    <property type="term" value="C:cytosol"/>
    <property type="evidence" value="ECO:0000318"/>
    <property type="project" value="GO_Central"/>
</dbReference>
<dbReference type="GO" id="GO:0005524">
    <property type="term" value="F:ATP binding"/>
    <property type="evidence" value="ECO:0007669"/>
    <property type="project" value="UniProtKB-UniRule"/>
</dbReference>
<dbReference type="GO" id="GO:0004810">
    <property type="term" value="F:CCA tRNA nucleotidyltransferase activity"/>
    <property type="evidence" value="ECO:0007669"/>
    <property type="project" value="InterPro"/>
</dbReference>
<dbReference type="GO" id="GO:0000049">
    <property type="term" value="F:tRNA binding"/>
    <property type="evidence" value="ECO:0007669"/>
    <property type="project" value="UniProtKB-UniRule"/>
</dbReference>
<dbReference type="GO" id="GO:0140741">
    <property type="term" value="F:tRNA-uracil-4 sulfurtransferase activity"/>
    <property type="evidence" value="ECO:0007669"/>
    <property type="project" value="UniProtKB-EC"/>
</dbReference>
<dbReference type="GO" id="GO:0009228">
    <property type="term" value="P:thiamine biosynthetic process"/>
    <property type="evidence" value="ECO:0007669"/>
    <property type="project" value="UniProtKB-KW"/>
</dbReference>
<dbReference type="GO" id="GO:0009229">
    <property type="term" value="P:thiamine diphosphate biosynthetic process"/>
    <property type="evidence" value="ECO:0007669"/>
    <property type="project" value="UniProtKB-UniRule"/>
</dbReference>
<dbReference type="GO" id="GO:0052837">
    <property type="term" value="P:thiazole biosynthetic process"/>
    <property type="evidence" value="ECO:0000318"/>
    <property type="project" value="GO_Central"/>
</dbReference>
<dbReference type="GO" id="GO:0002937">
    <property type="term" value="P:tRNA 4-thiouridine biosynthesis"/>
    <property type="evidence" value="ECO:0000318"/>
    <property type="project" value="GO_Central"/>
</dbReference>
<dbReference type="CDD" id="cd01712">
    <property type="entry name" value="PPase_ThiI"/>
    <property type="match status" value="1"/>
</dbReference>
<dbReference type="CDD" id="cd11716">
    <property type="entry name" value="THUMP_ThiI"/>
    <property type="match status" value="1"/>
</dbReference>
<dbReference type="FunFam" id="3.30.2130.30:FF:000009">
    <property type="entry name" value="Probable tRNA sulfurtransferase"/>
    <property type="match status" value="1"/>
</dbReference>
<dbReference type="FunFam" id="3.40.50.620:FF:000053">
    <property type="entry name" value="Probable tRNA sulfurtransferase"/>
    <property type="match status" value="1"/>
</dbReference>
<dbReference type="Gene3D" id="3.30.2130.30">
    <property type="match status" value="1"/>
</dbReference>
<dbReference type="Gene3D" id="3.40.50.620">
    <property type="entry name" value="HUPs"/>
    <property type="match status" value="1"/>
</dbReference>
<dbReference type="HAMAP" id="MF_00021">
    <property type="entry name" value="ThiI"/>
    <property type="match status" value="1"/>
</dbReference>
<dbReference type="InterPro" id="IPR014729">
    <property type="entry name" value="Rossmann-like_a/b/a_fold"/>
</dbReference>
<dbReference type="InterPro" id="IPR020536">
    <property type="entry name" value="ThiI_AANH"/>
</dbReference>
<dbReference type="InterPro" id="IPR054173">
    <property type="entry name" value="ThiI_fer"/>
</dbReference>
<dbReference type="InterPro" id="IPR049961">
    <property type="entry name" value="ThiI_N"/>
</dbReference>
<dbReference type="InterPro" id="IPR004114">
    <property type="entry name" value="THUMP_dom"/>
</dbReference>
<dbReference type="InterPro" id="IPR049962">
    <property type="entry name" value="THUMP_ThiI"/>
</dbReference>
<dbReference type="InterPro" id="IPR003720">
    <property type="entry name" value="tRNA_STrfase"/>
</dbReference>
<dbReference type="InterPro" id="IPR050102">
    <property type="entry name" value="tRNA_sulfurtransferase_ThiI"/>
</dbReference>
<dbReference type="NCBIfam" id="TIGR00342">
    <property type="entry name" value="tRNA uracil 4-sulfurtransferase ThiI"/>
    <property type="match status" value="1"/>
</dbReference>
<dbReference type="PANTHER" id="PTHR43209">
    <property type="entry name" value="TRNA SULFURTRANSFERASE"/>
    <property type="match status" value="1"/>
</dbReference>
<dbReference type="PANTHER" id="PTHR43209:SF1">
    <property type="entry name" value="TRNA SULFURTRANSFERASE"/>
    <property type="match status" value="1"/>
</dbReference>
<dbReference type="Pfam" id="PF02568">
    <property type="entry name" value="ThiI"/>
    <property type="match status" value="1"/>
</dbReference>
<dbReference type="Pfam" id="PF22025">
    <property type="entry name" value="ThiI_fer"/>
    <property type="match status" value="1"/>
</dbReference>
<dbReference type="Pfam" id="PF02926">
    <property type="entry name" value="THUMP"/>
    <property type="match status" value="1"/>
</dbReference>
<dbReference type="SMART" id="SM00981">
    <property type="entry name" value="THUMP"/>
    <property type="match status" value="1"/>
</dbReference>
<dbReference type="SUPFAM" id="SSF52402">
    <property type="entry name" value="Adenine nucleotide alpha hydrolases-like"/>
    <property type="match status" value="1"/>
</dbReference>
<dbReference type="SUPFAM" id="SSF143437">
    <property type="entry name" value="THUMP domain-like"/>
    <property type="match status" value="1"/>
</dbReference>
<dbReference type="PROSITE" id="PS51165">
    <property type="entry name" value="THUMP"/>
    <property type="match status" value="1"/>
</dbReference>
<name>THII_STAA8</name>
<evidence type="ECO:0000255" key="1">
    <source>
        <dbReference type="HAMAP-Rule" id="MF_00021"/>
    </source>
</evidence>
<sequence>MKYDHLLVRYGELTLKGSNRKKFVNQLRNNVNKSLKGLDGFVVKGKRDRMYIELEDHADINEITYRLSKIFGIKSISPVLKVEKTIEAISAAAIKFAQQFEENSTFKIDVKRADKNFPMDTYELQRELGGAVLKHFDNISVNVKRPDHEIRVEVRLDAIYMYEEVVPGSGGLPVGTGGKTLLMLSGGIDSPVAGMEVMRRGVTIEAIHFHSPPFTSDQAKEKVIELTRILAERVGPIKLHIVPFTELQKQVNKVVHPRYTMTSTRRMMMRVADKLVHQIGALAIVNGENLGQVASQTLHSMYAINNVTSTPVLRPLLTYDKEEIIIKSKEIGTFETSIQPFEDCCTIFTPKNPVTEPNFDKVVQYESVFDFEEMINRAVENIETLEITSDYKTIKEQQTNQLINDFL</sequence>
<accession>Q2FXL1</accession>
<reference key="1">
    <citation type="book" date="2006" name="Gram positive pathogens, 2nd edition">
        <title>The Staphylococcus aureus NCTC 8325 genome.</title>
        <editorList>
            <person name="Fischetti V."/>
            <person name="Novick R."/>
            <person name="Ferretti J."/>
            <person name="Portnoy D."/>
            <person name="Rood J."/>
        </editorList>
        <authorList>
            <person name="Gillaspy A.F."/>
            <person name="Worrell V."/>
            <person name="Orvis J."/>
            <person name="Roe B.A."/>
            <person name="Dyer D.W."/>
            <person name="Iandolo J.J."/>
        </authorList>
    </citation>
    <scope>NUCLEOTIDE SEQUENCE [LARGE SCALE GENOMIC DNA]</scope>
    <source>
        <strain>NCTC 8325 / PS 47</strain>
    </source>
</reference>
<organism>
    <name type="scientific">Staphylococcus aureus (strain NCTC 8325 / PS 47)</name>
    <dbReference type="NCBI Taxonomy" id="93061"/>
    <lineage>
        <taxon>Bacteria</taxon>
        <taxon>Bacillati</taxon>
        <taxon>Bacillota</taxon>
        <taxon>Bacilli</taxon>
        <taxon>Bacillales</taxon>
        <taxon>Staphylococcaceae</taxon>
        <taxon>Staphylococcus</taxon>
    </lineage>
</organism>
<protein>
    <recommendedName>
        <fullName evidence="1">Probable tRNA sulfurtransferase</fullName>
        <ecNumber evidence="1">2.8.1.4</ecNumber>
    </recommendedName>
    <alternativeName>
        <fullName evidence="1">Sulfur carrier protein ThiS sulfurtransferase</fullName>
    </alternativeName>
    <alternativeName>
        <fullName evidence="1">Thiamine biosynthesis protein ThiI</fullName>
    </alternativeName>
    <alternativeName>
        <fullName evidence="1">tRNA 4-thiouridine synthase</fullName>
    </alternativeName>
</protein>
<gene>
    <name evidence="1" type="primary">thiI</name>
    <name type="ordered locus">SAOUHSC_01824</name>
</gene>
<feature type="chain" id="PRO_1000074285" description="Probable tRNA sulfurtransferase">
    <location>
        <begin position="1"/>
        <end position="407"/>
    </location>
</feature>
<feature type="domain" description="THUMP" evidence="1">
    <location>
        <begin position="61"/>
        <end position="165"/>
    </location>
</feature>
<feature type="binding site" evidence="1">
    <location>
        <begin position="183"/>
        <end position="184"/>
    </location>
    <ligand>
        <name>ATP</name>
        <dbReference type="ChEBI" id="CHEBI:30616"/>
    </ligand>
</feature>
<feature type="binding site" evidence="1">
    <location>
        <begin position="208"/>
        <end position="209"/>
    </location>
    <ligand>
        <name>ATP</name>
        <dbReference type="ChEBI" id="CHEBI:30616"/>
    </ligand>
</feature>
<feature type="binding site" evidence="1">
    <location>
        <position position="265"/>
    </location>
    <ligand>
        <name>ATP</name>
        <dbReference type="ChEBI" id="CHEBI:30616"/>
    </ligand>
</feature>
<feature type="binding site" evidence="1">
    <location>
        <position position="287"/>
    </location>
    <ligand>
        <name>ATP</name>
        <dbReference type="ChEBI" id="CHEBI:30616"/>
    </ligand>
</feature>
<feature type="binding site" evidence="1">
    <location>
        <position position="296"/>
    </location>
    <ligand>
        <name>ATP</name>
        <dbReference type="ChEBI" id="CHEBI:30616"/>
    </ligand>
</feature>
<proteinExistence type="inferred from homology"/>